<sequence>MARSSSWHRMSNFMRKYRKIPHSSFKTKWNENLKQKYAMEELRSNLLTDSENASVMRTLLSSFQLHNCEPTPQAYRFVIKTLAKSSQLENISSVLYHLEVSEKFDTPESIFRDVIAAYGFSGRIEEAIEVFFKIPNFRCVPSAYTLNALLLVLVRKRQSLELVPEILVKACRMGVRLEESTFGILIDALCRIGEVDCATELVRYMSQDSVIVDPRLYSRLLSSVCKHKDSSCFDVIGYLEDLRKTRFSPGLRDYTVVMRFLVEGGRGKEVVSVLNQMKCDRVEPDLVCYTIVLQGVIADEDYPKADKLFDELLLLGLAPDVYTYNVYINGLCKQNDIEGALKMMSSMNKLGSEPNVVTYNILIKALVKAGDLSRAKTLWKEMETNGVNRNSHTFDIMISAYIEVDEVVCAHGLLEEAFNMNVFVKSSRIEEVISRLCEKGLMDQAVELLAHLV</sequence>
<evidence type="ECO:0000255" key="1"/>
<evidence type="ECO:0000305" key="2"/>
<name>PP193_ARATH</name>
<accession>Q8L6Y7</accession>
<accession>O80909</accession>
<protein>
    <recommendedName>
        <fullName>Pentatricopeptide repeat-containing protein At2g38420, mitochondrial</fullName>
    </recommendedName>
</protein>
<organism>
    <name type="scientific">Arabidopsis thaliana</name>
    <name type="common">Mouse-ear cress</name>
    <dbReference type="NCBI Taxonomy" id="3702"/>
    <lineage>
        <taxon>Eukaryota</taxon>
        <taxon>Viridiplantae</taxon>
        <taxon>Streptophyta</taxon>
        <taxon>Embryophyta</taxon>
        <taxon>Tracheophyta</taxon>
        <taxon>Spermatophyta</taxon>
        <taxon>Magnoliopsida</taxon>
        <taxon>eudicotyledons</taxon>
        <taxon>Gunneridae</taxon>
        <taxon>Pentapetalae</taxon>
        <taxon>rosids</taxon>
        <taxon>malvids</taxon>
        <taxon>Brassicales</taxon>
        <taxon>Brassicaceae</taxon>
        <taxon>Camelineae</taxon>
        <taxon>Arabidopsis</taxon>
    </lineage>
</organism>
<comment type="subcellular location">
    <subcellularLocation>
        <location evidence="2">Mitochondrion</location>
    </subcellularLocation>
</comment>
<comment type="similarity">
    <text evidence="2">Belongs to the PPR family. P subfamily.</text>
</comment>
<comment type="sequence caution" evidence="2">
    <conflict type="erroneous initiation">
        <sequence resource="EMBL-CDS" id="AAM98219"/>
    </conflict>
</comment>
<comment type="online information" name="Pentatricopeptide repeat proteins">
    <link uri="https://ppr.plantenergy.uwa.edu.au"/>
</comment>
<feature type="transit peptide" description="Mitochondrion" evidence="1">
    <location>
        <begin position="1"/>
        <end position="77"/>
    </location>
</feature>
<feature type="chain" id="PRO_0000356052" description="Pentatricopeptide repeat-containing protein At2g38420, mitochondrial">
    <location>
        <begin position="78"/>
        <end position="453"/>
    </location>
</feature>
<feature type="repeat" description="PPR 1">
    <location>
        <begin position="107"/>
        <end position="141"/>
    </location>
</feature>
<feature type="repeat" description="PPR 2">
    <location>
        <begin position="142"/>
        <end position="177"/>
    </location>
</feature>
<feature type="repeat" description="PPR 3">
    <location>
        <begin position="178"/>
        <end position="212"/>
    </location>
</feature>
<feature type="repeat" description="PPR 4">
    <location>
        <begin position="213"/>
        <end position="249"/>
    </location>
</feature>
<feature type="repeat" description="PPR 5">
    <location>
        <begin position="250"/>
        <end position="284"/>
    </location>
</feature>
<feature type="repeat" description="PPR 6">
    <location>
        <begin position="285"/>
        <end position="319"/>
    </location>
</feature>
<feature type="repeat" description="PPR 7">
    <location>
        <begin position="320"/>
        <end position="354"/>
    </location>
</feature>
<feature type="repeat" description="PPR 8">
    <location>
        <begin position="355"/>
        <end position="389"/>
    </location>
</feature>
<feature type="repeat" description="PPR 9">
    <location>
        <begin position="390"/>
        <end position="424"/>
    </location>
</feature>
<keyword id="KW-0496">Mitochondrion</keyword>
<keyword id="KW-1185">Reference proteome</keyword>
<keyword id="KW-0677">Repeat</keyword>
<keyword id="KW-0809">Transit peptide</keyword>
<reference key="1">
    <citation type="journal article" date="1999" name="Nature">
        <title>Sequence and analysis of chromosome 2 of the plant Arabidopsis thaliana.</title>
        <authorList>
            <person name="Lin X."/>
            <person name="Kaul S."/>
            <person name="Rounsley S.D."/>
            <person name="Shea T.P."/>
            <person name="Benito M.-I."/>
            <person name="Town C.D."/>
            <person name="Fujii C.Y."/>
            <person name="Mason T.M."/>
            <person name="Bowman C.L."/>
            <person name="Barnstead M.E."/>
            <person name="Feldblyum T.V."/>
            <person name="Buell C.R."/>
            <person name="Ketchum K.A."/>
            <person name="Lee J.J."/>
            <person name="Ronning C.M."/>
            <person name="Koo H.L."/>
            <person name="Moffat K.S."/>
            <person name="Cronin L.A."/>
            <person name="Shen M."/>
            <person name="Pai G."/>
            <person name="Van Aken S."/>
            <person name="Umayam L."/>
            <person name="Tallon L.J."/>
            <person name="Gill J.E."/>
            <person name="Adams M.D."/>
            <person name="Carrera A.J."/>
            <person name="Creasy T.H."/>
            <person name="Goodman H.M."/>
            <person name="Somerville C.R."/>
            <person name="Copenhaver G.P."/>
            <person name="Preuss D."/>
            <person name="Nierman W.C."/>
            <person name="White O."/>
            <person name="Eisen J.A."/>
            <person name="Salzberg S.L."/>
            <person name="Fraser C.M."/>
            <person name="Venter J.C."/>
        </authorList>
    </citation>
    <scope>NUCLEOTIDE SEQUENCE [LARGE SCALE GENOMIC DNA]</scope>
    <source>
        <strain>cv. Columbia</strain>
    </source>
</reference>
<reference key="2">
    <citation type="journal article" date="2017" name="Plant J.">
        <title>Araport11: a complete reannotation of the Arabidopsis thaliana reference genome.</title>
        <authorList>
            <person name="Cheng C.Y."/>
            <person name="Krishnakumar V."/>
            <person name="Chan A.P."/>
            <person name="Thibaud-Nissen F."/>
            <person name="Schobel S."/>
            <person name="Town C.D."/>
        </authorList>
    </citation>
    <scope>GENOME REANNOTATION</scope>
    <source>
        <strain>cv. Columbia</strain>
    </source>
</reference>
<reference key="3">
    <citation type="journal article" date="2003" name="Science">
        <title>Empirical analysis of transcriptional activity in the Arabidopsis genome.</title>
        <authorList>
            <person name="Yamada K."/>
            <person name="Lim J."/>
            <person name="Dale J.M."/>
            <person name="Chen H."/>
            <person name="Shinn P."/>
            <person name="Palm C.J."/>
            <person name="Southwick A.M."/>
            <person name="Wu H.C."/>
            <person name="Kim C.J."/>
            <person name="Nguyen M."/>
            <person name="Pham P.K."/>
            <person name="Cheuk R.F."/>
            <person name="Karlin-Newmann G."/>
            <person name="Liu S.X."/>
            <person name="Lam B."/>
            <person name="Sakano H."/>
            <person name="Wu T."/>
            <person name="Yu G."/>
            <person name="Miranda M."/>
            <person name="Quach H.L."/>
            <person name="Tripp M."/>
            <person name="Chang C.H."/>
            <person name="Lee J.M."/>
            <person name="Toriumi M.J."/>
            <person name="Chan M.M."/>
            <person name="Tang C.C."/>
            <person name="Onodera C.S."/>
            <person name="Deng J.M."/>
            <person name="Akiyama K."/>
            <person name="Ansari Y."/>
            <person name="Arakawa T."/>
            <person name="Banh J."/>
            <person name="Banno F."/>
            <person name="Bowser L."/>
            <person name="Brooks S.Y."/>
            <person name="Carninci P."/>
            <person name="Chao Q."/>
            <person name="Choy N."/>
            <person name="Enju A."/>
            <person name="Goldsmith A.D."/>
            <person name="Gurjal M."/>
            <person name="Hansen N.F."/>
            <person name="Hayashizaki Y."/>
            <person name="Johnson-Hopson C."/>
            <person name="Hsuan V.W."/>
            <person name="Iida K."/>
            <person name="Karnes M."/>
            <person name="Khan S."/>
            <person name="Koesema E."/>
            <person name="Ishida J."/>
            <person name="Jiang P.X."/>
            <person name="Jones T."/>
            <person name="Kawai J."/>
            <person name="Kamiya A."/>
            <person name="Meyers C."/>
            <person name="Nakajima M."/>
            <person name="Narusaka M."/>
            <person name="Seki M."/>
            <person name="Sakurai T."/>
            <person name="Satou M."/>
            <person name="Tamse R."/>
            <person name="Vaysberg M."/>
            <person name="Wallender E.K."/>
            <person name="Wong C."/>
            <person name="Yamamura Y."/>
            <person name="Yuan S."/>
            <person name="Shinozaki K."/>
            <person name="Davis R.W."/>
            <person name="Theologis A."/>
            <person name="Ecker J.R."/>
        </authorList>
    </citation>
    <scope>NUCLEOTIDE SEQUENCE [LARGE SCALE MRNA] OF 5-453</scope>
    <source>
        <strain>cv. Columbia</strain>
    </source>
</reference>
<reference key="4">
    <citation type="journal article" date="2004" name="Plant Cell">
        <title>Genome-wide analysis of Arabidopsis pentatricopeptide repeat proteins reveals their essential role in organelle biogenesis.</title>
        <authorList>
            <person name="Lurin C."/>
            <person name="Andres C."/>
            <person name="Aubourg S."/>
            <person name="Bellaoui M."/>
            <person name="Bitton F."/>
            <person name="Bruyere C."/>
            <person name="Caboche M."/>
            <person name="Debast C."/>
            <person name="Gualberto J."/>
            <person name="Hoffmann B."/>
            <person name="Lecharny A."/>
            <person name="Le Ret M."/>
            <person name="Martin-Magniette M.-L."/>
            <person name="Mireau H."/>
            <person name="Peeters N."/>
            <person name="Renou J.-P."/>
            <person name="Szurek B."/>
            <person name="Taconnat L."/>
            <person name="Small I."/>
        </authorList>
    </citation>
    <scope>GENE FAMILY</scope>
</reference>
<gene>
    <name type="ordered locus">At2g38420</name>
    <name type="ORF">T19C21.9</name>
</gene>
<dbReference type="EMBL" id="AC004683">
    <property type="protein sequence ID" value="AAC28762.1"/>
    <property type="molecule type" value="Genomic_DNA"/>
</dbReference>
<dbReference type="EMBL" id="CP002685">
    <property type="protein sequence ID" value="AEC09535.1"/>
    <property type="molecule type" value="Genomic_DNA"/>
</dbReference>
<dbReference type="EMBL" id="AY140078">
    <property type="protein sequence ID" value="AAM98219.1"/>
    <property type="status" value="ALT_INIT"/>
    <property type="molecule type" value="mRNA"/>
</dbReference>
<dbReference type="EMBL" id="BT008752">
    <property type="protein sequence ID" value="AAP49514.1"/>
    <property type="molecule type" value="mRNA"/>
</dbReference>
<dbReference type="PIR" id="T02503">
    <property type="entry name" value="T02503"/>
</dbReference>
<dbReference type="RefSeq" id="NP_181376.3">
    <property type="nucleotide sequence ID" value="NM_129398.4"/>
</dbReference>
<dbReference type="SMR" id="Q8L6Y7"/>
<dbReference type="FunCoup" id="Q8L6Y7">
    <property type="interactions" value="232"/>
</dbReference>
<dbReference type="iPTMnet" id="Q8L6Y7"/>
<dbReference type="PaxDb" id="3702-AT2G38420.1"/>
<dbReference type="EnsemblPlants" id="AT2G38420.1">
    <property type="protein sequence ID" value="AT2G38420.1"/>
    <property type="gene ID" value="AT2G38420"/>
</dbReference>
<dbReference type="GeneID" id="818423"/>
<dbReference type="Gramene" id="AT2G38420.1">
    <property type="protein sequence ID" value="AT2G38420.1"/>
    <property type="gene ID" value="AT2G38420"/>
</dbReference>
<dbReference type="KEGG" id="ath:AT2G38420"/>
<dbReference type="Araport" id="AT2G38420"/>
<dbReference type="TAIR" id="AT2G38420"/>
<dbReference type="eggNOG" id="KOG4197">
    <property type="taxonomic scope" value="Eukaryota"/>
</dbReference>
<dbReference type="HOGENOM" id="CLU_002706_49_0_1"/>
<dbReference type="InParanoid" id="Q8L6Y7"/>
<dbReference type="OMA" id="RMLGCME"/>
<dbReference type="PhylomeDB" id="Q8L6Y7"/>
<dbReference type="PRO" id="PR:Q8L6Y7"/>
<dbReference type="Proteomes" id="UP000006548">
    <property type="component" value="Chromosome 2"/>
</dbReference>
<dbReference type="ExpressionAtlas" id="Q8L6Y7">
    <property type="expression patterns" value="baseline and differential"/>
</dbReference>
<dbReference type="GO" id="GO:0005739">
    <property type="term" value="C:mitochondrion"/>
    <property type="evidence" value="ECO:0007669"/>
    <property type="project" value="UniProtKB-SubCell"/>
</dbReference>
<dbReference type="Gene3D" id="1.25.40.10">
    <property type="entry name" value="Tetratricopeptide repeat domain"/>
    <property type="match status" value="3"/>
</dbReference>
<dbReference type="InterPro" id="IPR002885">
    <property type="entry name" value="Pentatricopeptide_rpt"/>
</dbReference>
<dbReference type="InterPro" id="IPR011990">
    <property type="entry name" value="TPR-like_helical_dom_sf"/>
</dbReference>
<dbReference type="NCBIfam" id="TIGR00756">
    <property type="entry name" value="PPR"/>
    <property type="match status" value="4"/>
</dbReference>
<dbReference type="PANTHER" id="PTHR47936:SF1">
    <property type="entry name" value="PENTATRICOPEPTIDE REPEAT-CONTAINING PROTEIN GUN1, CHLOROPLASTIC"/>
    <property type="match status" value="1"/>
</dbReference>
<dbReference type="PANTHER" id="PTHR47936">
    <property type="entry name" value="PPR_LONG DOMAIN-CONTAINING PROTEIN"/>
    <property type="match status" value="1"/>
</dbReference>
<dbReference type="Pfam" id="PF01535">
    <property type="entry name" value="PPR"/>
    <property type="match status" value="1"/>
</dbReference>
<dbReference type="Pfam" id="PF12854">
    <property type="entry name" value="PPR_1"/>
    <property type="match status" value="1"/>
</dbReference>
<dbReference type="Pfam" id="PF13041">
    <property type="entry name" value="PPR_2"/>
    <property type="match status" value="1"/>
</dbReference>
<dbReference type="Pfam" id="PF13812">
    <property type="entry name" value="PPR_3"/>
    <property type="match status" value="1"/>
</dbReference>
<dbReference type="PROSITE" id="PS51375">
    <property type="entry name" value="PPR"/>
    <property type="match status" value="10"/>
</dbReference>
<proteinExistence type="evidence at transcript level"/>